<accession>Q1LCQ8</accession>
<organism>
    <name type="scientific">Cupriavidus metallidurans (strain ATCC 43123 / DSM 2839 / NBRC 102507 / CH34)</name>
    <name type="common">Ralstonia metallidurans</name>
    <dbReference type="NCBI Taxonomy" id="266264"/>
    <lineage>
        <taxon>Bacteria</taxon>
        <taxon>Pseudomonadati</taxon>
        <taxon>Pseudomonadota</taxon>
        <taxon>Betaproteobacteria</taxon>
        <taxon>Burkholderiales</taxon>
        <taxon>Burkholderiaceae</taxon>
        <taxon>Cupriavidus</taxon>
    </lineage>
</organism>
<sequence length="345" mass="36821">MTDKKLYISDVTLRDGSHAIRHQYSVPQVRAIARALDAAGVDSIEVAHGDGLAGSSFNYGFGAHTDVEWIAAVAESVQRAAVATLLLPGIGTVHDLREAYAAGARVVRVATHCTEADTARQHIETARSMGMNVAGFLMMSHMIPPDRLAGQAKLMESYGAHCVYVVDSGGALTMDGVRARFRAFKDVLDPKTETGMHAHHNLSLGVANSIVAVEEGCDRIDASLAGMGAGAGNAPLEVFIAAAERMGWHHGCDLYQLMDAADDIVRPLQDRPVRVDRETLALGYAGVYSSFLRHAESAAGKYGLKTVDILVELGRRRMVGGQEDMIVDVALDLQRSGGAKSREAA</sequence>
<dbReference type="EC" id="4.1.3.39" evidence="1"/>
<dbReference type="EMBL" id="CP000353">
    <property type="protein sequence ID" value="ABF12068.1"/>
    <property type="molecule type" value="Genomic_DNA"/>
</dbReference>
<dbReference type="RefSeq" id="WP_011519614.1">
    <property type="nucleotide sequence ID" value="NC_007974.2"/>
</dbReference>
<dbReference type="SMR" id="Q1LCQ8"/>
<dbReference type="KEGG" id="rme:Rmet_5209"/>
<dbReference type="eggNOG" id="COG0119">
    <property type="taxonomic scope" value="Bacteria"/>
</dbReference>
<dbReference type="HOGENOM" id="CLU_049173_0_0_4"/>
<dbReference type="Proteomes" id="UP000002429">
    <property type="component" value="Plasmid megaplasmid CH34"/>
</dbReference>
<dbReference type="GO" id="GO:0003852">
    <property type="term" value="F:2-isopropylmalate synthase activity"/>
    <property type="evidence" value="ECO:0007669"/>
    <property type="project" value="TreeGrafter"/>
</dbReference>
<dbReference type="GO" id="GO:0008701">
    <property type="term" value="F:4-hydroxy-2-oxovalerate aldolase activity"/>
    <property type="evidence" value="ECO:0007669"/>
    <property type="project" value="UniProtKB-UniRule"/>
</dbReference>
<dbReference type="GO" id="GO:0030145">
    <property type="term" value="F:manganese ion binding"/>
    <property type="evidence" value="ECO:0007669"/>
    <property type="project" value="UniProtKB-UniRule"/>
</dbReference>
<dbReference type="GO" id="GO:0009056">
    <property type="term" value="P:catabolic process"/>
    <property type="evidence" value="ECO:0007669"/>
    <property type="project" value="UniProtKB-KW"/>
</dbReference>
<dbReference type="GO" id="GO:0009098">
    <property type="term" value="P:L-leucine biosynthetic process"/>
    <property type="evidence" value="ECO:0007669"/>
    <property type="project" value="TreeGrafter"/>
</dbReference>
<dbReference type="CDD" id="cd07943">
    <property type="entry name" value="DRE_TIM_HOA"/>
    <property type="match status" value="1"/>
</dbReference>
<dbReference type="FunFam" id="1.10.8.60:FF:000042">
    <property type="entry name" value="4-hydroxy-2-oxovalerate aldolase"/>
    <property type="match status" value="1"/>
</dbReference>
<dbReference type="Gene3D" id="1.10.8.60">
    <property type="match status" value="1"/>
</dbReference>
<dbReference type="Gene3D" id="3.20.20.70">
    <property type="entry name" value="Aldolase class I"/>
    <property type="match status" value="1"/>
</dbReference>
<dbReference type="HAMAP" id="MF_01656">
    <property type="entry name" value="HOA"/>
    <property type="match status" value="1"/>
</dbReference>
<dbReference type="InterPro" id="IPR050073">
    <property type="entry name" value="2-IPM_HCS-like"/>
</dbReference>
<dbReference type="InterPro" id="IPR017629">
    <property type="entry name" value="4OH_2_O-val_aldolase"/>
</dbReference>
<dbReference type="InterPro" id="IPR013785">
    <property type="entry name" value="Aldolase_TIM"/>
</dbReference>
<dbReference type="InterPro" id="IPR012425">
    <property type="entry name" value="DmpG_comm"/>
</dbReference>
<dbReference type="InterPro" id="IPR035685">
    <property type="entry name" value="DRE_TIM_HOA"/>
</dbReference>
<dbReference type="InterPro" id="IPR000891">
    <property type="entry name" value="PYR_CT"/>
</dbReference>
<dbReference type="NCBIfam" id="TIGR03217">
    <property type="entry name" value="4OH_2_O_val_ald"/>
    <property type="match status" value="1"/>
</dbReference>
<dbReference type="NCBIfam" id="NF006049">
    <property type="entry name" value="PRK08195.1"/>
    <property type="match status" value="1"/>
</dbReference>
<dbReference type="PANTHER" id="PTHR10277:SF9">
    <property type="entry name" value="2-ISOPROPYLMALATE SYNTHASE 1, CHLOROPLASTIC-RELATED"/>
    <property type="match status" value="1"/>
</dbReference>
<dbReference type="PANTHER" id="PTHR10277">
    <property type="entry name" value="HOMOCITRATE SYNTHASE-RELATED"/>
    <property type="match status" value="1"/>
</dbReference>
<dbReference type="Pfam" id="PF07836">
    <property type="entry name" value="DmpG_comm"/>
    <property type="match status" value="1"/>
</dbReference>
<dbReference type="Pfam" id="PF00682">
    <property type="entry name" value="HMGL-like"/>
    <property type="match status" value="1"/>
</dbReference>
<dbReference type="SUPFAM" id="SSF51569">
    <property type="entry name" value="Aldolase"/>
    <property type="match status" value="1"/>
</dbReference>
<dbReference type="SUPFAM" id="SSF89000">
    <property type="entry name" value="post-HMGL domain-like"/>
    <property type="match status" value="1"/>
</dbReference>
<dbReference type="PROSITE" id="PS50991">
    <property type="entry name" value="PYR_CT"/>
    <property type="match status" value="1"/>
</dbReference>
<protein>
    <recommendedName>
        <fullName evidence="1">4-hydroxy-2-oxovalerate aldolase 2</fullName>
        <shortName evidence="1">HOA 2</shortName>
        <ecNumber evidence="1">4.1.3.39</ecNumber>
    </recommendedName>
    <alternativeName>
        <fullName evidence="1">4-hydroxy-2-keto-pentanoic acid aldolase 2</fullName>
    </alternativeName>
    <alternativeName>
        <fullName evidence="1">4-hydroxy-2-oxopentanoate aldolase 2</fullName>
    </alternativeName>
</protein>
<keyword id="KW-0058">Aromatic hydrocarbons catabolism</keyword>
<keyword id="KW-0456">Lyase</keyword>
<keyword id="KW-0464">Manganese</keyword>
<keyword id="KW-0479">Metal-binding</keyword>
<keyword id="KW-0614">Plasmid</keyword>
<keyword id="KW-1185">Reference proteome</keyword>
<evidence type="ECO:0000255" key="1">
    <source>
        <dbReference type="HAMAP-Rule" id="MF_01656"/>
    </source>
</evidence>
<feature type="chain" id="PRO_0000387889" description="4-hydroxy-2-oxovalerate aldolase 2">
    <location>
        <begin position="1"/>
        <end position="345"/>
    </location>
</feature>
<feature type="domain" description="Pyruvate carboxyltransferase" evidence="1">
    <location>
        <begin position="6"/>
        <end position="258"/>
    </location>
</feature>
<feature type="active site" description="Proton acceptor" evidence="1">
    <location>
        <position position="18"/>
    </location>
</feature>
<feature type="binding site" evidence="1">
    <location>
        <begin position="14"/>
        <end position="15"/>
    </location>
    <ligand>
        <name>substrate</name>
    </ligand>
</feature>
<feature type="binding site" evidence="1">
    <location>
        <position position="15"/>
    </location>
    <ligand>
        <name>Mn(2+)</name>
        <dbReference type="ChEBI" id="CHEBI:29035"/>
    </ligand>
</feature>
<feature type="binding site" evidence="1">
    <location>
        <position position="168"/>
    </location>
    <ligand>
        <name>substrate</name>
    </ligand>
</feature>
<feature type="binding site" evidence="1">
    <location>
        <position position="197"/>
    </location>
    <ligand>
        <name>Mn(2+)</name>
        <dbReference type="ChEBI" id="CHEBI:29035"/>
    </ligand>
</feature>
<feature type="binding site" evidence="1">
    <location>
        <position position="197"/>
    </location>
    <ligand>
        <name>substrate</name>
    </ligand>
</feature>
<feature type="binding site" evidence="1">
    <location>
        <position position="199"/>
    </location>
    <ligand>
        <name>Mn(2+)</name>
        <dbReference type="ChEBI" id="CHEBI:29035"/>
    </ligand>
</feature>
<feature type="binding site" evidence="1">
    <location>
        <position position="288"/>
    </location>
    <ligand>
        <name>substrate</name>
    </ligand>
</feature>
<feature type="site" description="Transition state stabilizer" evidence="1">
    <location>
        <position position="14"/>
    </location>
</feature>
<comment type="catalytic activity">
    <reaction evidence="1">
        <text>(S)-4-hydroxy-2-oxopentanoate = acetaldehyde + pyruvate</text>
        <dbReference type="Rhea" id="RHEA:22624"/>
        <dbReference type="ChEBI" id="CHEBI:15343"/>
        <dbReference type="ChEBI" id="CHEBI:15361"/>
        <dbReference type="ChEBI" id="CHEBI:73143"/>
        <dbReference type="EC" id="4.1.3.39"/>
    </reaction>
</comment>
<comment type="similarity">
    <text evidence="1">Belongs to the 4-hydroxy-2-oxovalerate aldolase family.</text>
</comment>
<reference key="1">
    <citation type="journal article" date="2010" name="PLoS ONE">
        <title>The complete genome sequence of Cupriavidus metallidurans strain CH34, a master survivalist in harsh and anthropogenic environments.</title>
        <authorList>
            <person name="Janssen P.J."/>
            <person name="Van Houdt R."/>
            <person name="Moors H."/>
            <person name="Monsieurs P."/>
            <person name="Morin N."/>
            <person name="Michaux A."/>
            <person name="Benotmane M.A."/>
            <person name="Leys N."/>
            <person name="Vallaeys T."/>
            <person name="Lapidus A."/>
            <person name="Monchy S."/>
            <person name="Medigue C."/>
            <person name="Taghavi S."/>
            <person name="McCorkle S."/>
            <person name="Dunn J."/>
            <person name="van der Lelie D."/>
            <person name="Mergeay M."/>
        </authorList>
    </citation>
    <scope>NUCLEOTIDE SEQUENCE [LARGE SCALE GENOMIC DNA]</scope>
    <source>
        <strain>ATCC 43123 / DSM 2839 / NBRC 102507 / CH34</strain>
    </source>
</reference>
<geneLocation type="plasmid">
    <name>megaplasmid CH34</name>
</geneLocation>
<proteinExistence type="inferred from homology"/>
<gene>
    <name type="ordered locus">Rmet_5209</name>
</gene>
<name>HOA2_CUPMC</name>